<name>LPXH_YERPE</name>
<protein>
    <recommendedName>
        <fullName evidence="1">UDP-2,3-diacylglucosamine hydrolase</fullName>
        <ecNumber evidence="1">3.6.1.54</ecNumber>
    </recommendedName>
    <alternativeName>
        <fullName evidence="1">UDP-2,3-diacylglucosamine diphosphatase</fullName>
    </alternativeName>
</protein>
<reference key="1">
    <citation type="journal article" date="2001" name="Nature">
        <title>Genome sequence of Yersinia pestis, the causative agent of plague.</title>
        <authorList>
            <person name="Parkhill J."/>
            <person name="Wren B.W."/>
            <person name="Thomson N.R."/>
            <person name="Titball R.W."/>
            <person name="Holden M.T.G."/>
            <person name="Prentice M.B."/>
            <person name="Sebaihia M."/>
            <person name="James K.D."/>
            <person name="Churcher C.M."/>
            <person name="Mungall K.L."/>
            <person name="Baker S."/>
            <person name="Basham D."/>
            <person name="Bentley S.D."/>
            <person name="Brooks K."/>
            <person name="Cerdeno-Tarraga A.-M."/>
            <person name="Chillingworth T."/>
            <person name="Cronin A."/>
            <person name="Davies R.M."/>
            <person name="Davis P."/>
            <person name="Dougan G."/>
            <person name="Feltwell T."/>
            <person name="Hamlin N."/>
            <person name="Holroyd S."/>
            <person name="Jagels K."/>
            <person name="Karlyshev A.V."/>
            <person name="Leather S."/>
            <person name="Moule S."/>
            <person name="Oyston P.C.F."/>
            <person name="Quail M.A."/>
            <person name="Rutherford K.M."/>
            <person name="Simmonds M."/>
            <person name="Skelton J."/>
            <person name="Stevens K."/>
            <person name="Whitehead S."/>
            <person name="Barrell B.G."/>
        </authorList>
    </citation>
    <scope>NUCLEOTIDE SEQUENCE [LARGE SCALE GENOMIC DNA]</scope>
    <source>
        <strain>CO-92 / Biovar Orientalis</strain>
    </source>
</reference>
<reference key="2">
    <citation type="journal article" date="2002" name="J. Bacteriol.">
        <title>Genome sequence of Yersinia pestis KIM.</title>
        <authorList>
            <person name="Deng W."/>
            <person name="Burland V."/>
            <person name="Plunkett G. III"/>
            <person name="Boutin A."/>
            <person name="Mayhew G.F."/>
            <person name="Liss P."/>
            <person name="Perna N.T."/>
            <person name="Rose D.J."/>
            <person name="Mau B."/>
            <person name="Zhou S."/>
            <person name="Schwartz D.C."/>
            <person name="Fetherston J.D."/>
            <person name="Lindler L.E."/>
            <person name="Brubaker R.R."/>
            <person name="Plano G.V."/>
            <person name="Straley S.C."/>
            <person name="McDonough K.A."/>
            <person name="Nilles M.L."/>
            <person name="Matson J.S."/>
            <person name="Blattner F.R."/>
            <person name="Perry R.D."/>
        </authorList>
    </citation>
    <scope>NUCLEOTIDE SEQUENCE [LARGE SCALE GENOMIC DNA]</scope>
    <source>
        <strain>KIM10+ / Biovar Mediaevalis</strain>
    </source>
</reference>
<reference key="3">
    <citation type="journal article" date="2004" name="DNA Res.">
        <title>Complete genome sequence of Yersinia pestis strain 91001, an isolate avirulent to humans.</title>
        <authorList>
            <person name="Song Y."/>
            <person name="Tong Z."/>
            <person name="Wang J."/>
            <person name="Wang L."/>
            <person name="Guo Z."/>
            <person name="Han Y."/>
            <person name="Zhang J."/>
            <person name="Pei D."/>
            <person name="Zhou D."/>
            <person name="Qin H."/>
            <person name="Pang X."/>
            <person name="Han Y."/>
            <person name="Zhai J."/>
            <person name="Li M."/>
            <person name="Cui B."/>
            <person name="Qi Z."/>
            <person name="Jin L."/>
            <person name="Dai R."/>
            <person name="Chen F."/>
            <person name="Li S."/>
            <person name="Ye C."/>
            <person name="Du Z."/>
            <person name="Lin W."/>
            <person name="Wang J."/>
            <person name="Yu J."/>
            <person name="Yang H."/>
            <person name="Wang J."/>
            <person name="Huang P."/>
            <person name="Yang R."/>
        </authorList>
    </citation>
    <scope>NUCLEOTIDE SEQUENCE [LARGE SCALE GENOMIC DNA]</scope>
    <source>
        <strain>91001 / Biovar Mediaevalis</strain>
    </source>
</reference>
<keyword id="KW-0997">Cell inner membrane</keyword>
<keyword id="KW-1003">Cell membrane</keyword>
<keyword id="KW-0378">Hydrolase</keyword>
<keyword id="KW-0441">Lipid A biosynthesis</keyword>
<keyword id="KW-0444">Lipid biosynthesis</keyword>
<keyword id="KW-0443">Lipid metabolism</keyword>
<keyword id="KW-0464">Manganese</keyword>
<keyword id="KW-0472">Membrane</keyword>
<keyword id="KW-0479">Metal-binding</keyword>
<keyword id="KW-1185">Reference proteome</keyword>
<sequence>MSTLFIADLHLSVQEPAITAGFLHFIQREAIHADALYILGDLFESWIGDDDPEPLYRQVAAALKSLQQQGVPCYFIHGNRDFLLGKRFAEESGMVLLPEENVVELYGRKILILHGDTLCTDDTDYQHFRKKVHNPLIQKLFLWIPLRLRLRIAAYMRNKSQQNNSGKSERIMDVNSKAVIDAFLRHDVSWMIHGHTHRPAIHSVELPMVTAHRVVLGAWHVEGSMVKVTADNVELITFPF</sequence>
<comment type="function">
    <text evidence="1">Hydrolyzes the pyrophosphate bond of UDP-2,3-diacylglucosamine to yield 2,3-diacylglucosamine 1-phosphate (lipid X) and UMP by catalyzing the attack of water at the alpha-P atom. Involved in the biosynthesis of lipid A, a phosphorylated glycolipid that anchors the lipopolysaccharide to the outer membrane of the cell.</text>
</comment>
<comment type="catalytic activity">
    <reaction evidence="1">
        <text>UDP-2-N,3-O-bis[(3R)-3-hydroxytetradecanoyl]-alpha-D-glucosamine + H2O = 2-N,3-O-bis[(3R)-3-hydroxytetradecanoyl]-alpha-D-glucosaminyl 1-phosphate + UMP + 2 H(+)</text>
        <dbReference type="Rhea" id="RHEA:25213"/>
        <dbReference type="ChEBI" id="CHEBI:15377"/>
        <dbReference type="ChEBI" id="CHEBI:15378"/>
        <dbReference type="ChEBI" id="CHEBI:57865"/>
        <dbReference type="ChEBI" id="CHEBI:57957"/>
        <dbReference type="ChEBI" id="CHEBI:78847"/>
        <dbReference type="EC" id="3.6.1.54"/>
    </reaction>
</comment>
<comment type="cofactor">
    <cofactor evidence="1">
        <name>Mn(2+)</name>
        <dbReference type="ChEBI" id="CHEBI:29035"/>
    </cofactor>
    <text evidence="1">Binds 2 Mn(2+) ions per subunit in a binuclear metal center.</text>
</comment>
<comment type="pathway">
    <text evidence="1">Glycolipid biosynthesis; lipid IV(A) biosynthesis; lipid IV(A) from (3R)-3-hydroxytetradecanoyl-[acyl-carrier-protein] and UDP-N-acetyl-alpha-D-glucosamine: step 4/6.</text>
</comment>
<comment type="subcellular location">
    <subcellularLocation>
        <location evidence="1">Cell inner membrane</location>
        <topology evidence="1">Peripheral membrane protein</topology>
        <orientation evidence="1">Cytoplasmic side</orientation>
    </subcellularLocation>
</comment>
<comment type="similarity">
    <text evidence="1">Belongs to the LpxH family.</text>
</comment>
<gene>
    <name evidence="1" type="primary">lpxH</name>
    <name type="ordered locus">YPO3075</name>
    <name type="ordered locus">y1105</name>
    <name type="ordered locus">YP_0850</name>
</gene>
<organism>
    <name type="scientific">Yersinia pestis</name>
    <dbReference type="NCBI Taxonomy" id="632"/>
    <lineage>
        <taxon>Bacteria</taxon>
        <taxon>Pseudomonadati</taxon>
        <taxon>Pseudomonadota</taxon>
        <taxon>Gammaproteobacteria</taxon>
        <taxon>Enterobacterales</taxon>
        <taxon>Yersiniaceae</taxon>
        <taxon>Yersinia</taxon>
    </lineage>
</organism>
<accession>Q8ZCB8</accession>
<accession>Q0WCJ3</accession>
<dbReference type="EC" id="3.6.1.54" evidence="1"/>
<dbReference type="EMBL" id="AL590842">
    <property type="protein sequence ID" value="CAL21677.1"/>
    <property type="molecule type" value="Genomic_DNA"/>
</dbReference>
<dbReference type="EMBL" id="AE009952">
    <property type="protein sequence ID" value="AAM84683.1"/>
    <property type="molecule type" value="Genomic_DNA"/>
</dbReference>
<dbReference type="EMBL" id="AE017042">
    <property type="protein sequence ID" value="AAS61109.1"/>
    <property type="molecule type" value="Genomic_DNA"/>
</dbReference>
<dbReference type="PIR" id="AB0374">
    <property type="entry name" value="AB0374"/>
</dbReference>
<dbReference type="RefSeq" id="WP_002208568.1">
    <property type="nucleotide sequence ID" value="NZ_WUCM01000009.1"/>
</dbReference>
<dbReference type="RefSeq" id="YP_002347995.1">
    <property type="nucleotide sequence ID" value="NC_003143.1"/>
</dbReference>
<dbReference type="SMR" id="Q8ZCB8"/>
<dbReference type="STRING" id="214092.YPO3075"/>
<dbReference type="PaxDb" id="214092-YPO3075"/>
<dbReference type="DNASU" id="1146052"/>
<dbReference type="EnsemblBacteria" id="AAS61109">
    <property type="protein sequence ID" value="AAS61109"/>
    <property type="gene ID" value="YP_0850"/>
</dbReference>
<dbReference type="KEGG" id="ype:YPO3075"/>
<dbReference type="KEGG" id="ypk:y1105"/>
<dbReference type="KEGG" id="ypm:YP_0850"/>
<dbReference type="PATRIC" id="fig|1028802.3.peg.1596"/>
<dbReference type="eggNOG" id="COG2908">
    <property type="taxonomic scope" value="Bacteria"/>
</dbReference>
<dbReference type="HOGENOM" id="CLU_074586_0_0_6"/>
<dbReference type="OMA" id="GHRHLPM"/>
<dbReference type="OrthoDB" id="9783283at2"/>
<dbReference type="UniPathway" id="UPA00359">
    <property type="reaction ID" value="UER00480"/>
</dbReference>
<dbReference type="Proteomes" id="UP000000815">
    <property type="component" value="Chromosome"/>
</dbReference>
<dbReference type="Proteomes" id="UP000001019">
    <property type="component" value="Chromosome"/>
</dbReference>
<dbReference type="Proteomes" id="UP000002490">
    <property type="component" value="Chromosome"/>
</dbReference>
<dbReference type="GO" id="GO:0005737">
    <property type="term" value="C:cytoplasm"/>
    <property type="evidence" value="ECO:0007669"/>
    <property type="project" value="InterPro"/>
</dbReference>
<dbReference type="GO" id="GO:0019897">
    <property type="term" value="C:extrinsic component of plasma membrane"/>
    <property type="evidence" value="ECO:0007669"/>
    <property type="project" value="UniProtKB-UniRule"/>
</dbReference>
<dbReference type="GO" id="GO:0030145">
    <property type="term" value="F:manganese ion binding"/>
    <property type="evidence" value="ECO:0007669"/>
    <property type="project" value="UniProtKB-UniRule"/>
</dbReference>
<dbReference type="GO" id="GO:0008758">
    <property type="term" value="F:UDP-2,3-diacylglucosamine hydrolase activity"/>
    <property type="evidence" value="ECO:0000318"/>
    <property type="project" value="GO_Central"/>
</dbReference>
<dbReference type="GO" id="GO:0009245">
    <property type="term" value="P:lipid A biosynthetic process"/>
    <property type="evidence" value="ECO:0000318"/>
    <property type="project" value="GO_Central"/>
</dbReference>
<dbReference type="CDD" id="cd07398">
    <property type="entry name" value="MPP_YbbF-LpxH"/>
    <property type="match status" value="1"/>
</dbReference>
<dbReference type="FunFam" id="3.60.21.10:FF:000074">
    <property type="entry name" value="UDP-2,3-diacylglucosamine hydrolase"/>
    <property type="match status" value="1"/>
</dbReference>
<dbReference type="Gene3D" id="3.60.21.10">
    <property type="match status" value="1"/>
</dbReference>
<dbReference type="HAMAP" id="MF_00575">
    <property type="entry name" value="LpxH"/>
    <property type="match status" value="1"/>
</dbReference>
<dbReference type="InterPro" id="IPR004843">
    <property type="entry name" value="Calcineurin-like_PHP_ApaH"/>
</dbReference>
<dbReference type="InterPro" id="IPR043461">
    <property type="entry name" value="LpxH-like"/>
</dbReference>
<dbReference type="InterPro" id="IPR029052">
    <property type="entry name" value="Metallo-depent_PP-like"/>
</dbReference>
<dbReference type="InterPro" id="IPR010138">
    <property type="entry name" value="UDP-diacylglucosamine_Hdrlase"/>
</dbReference>
<dbReference type="NCBIfam" id="TIGR01854">
    <property type="entry name" value="lipid_A_lpxH"/>
    <property type="match status" value="1"/>
</dbReference>
<dbReference type="NCBIfam" id="NF003743">
    <property type="entry name" value="PRK05340.1"/>
    <property type="match status" value="1"/>
</dbReference>
<dbReference type="PANTHER" id="PTHR34990:SF1">
    <property type="entry name" value="UDP-2,3-DIACYLGLUCOSAMINE HYDROLASE"/>
    <property type="match status" value="1"/>
</dbReference>
<dbReference type="PANTHER" id="PTHR34990">
    <property type="entry name" value="UDP-2,3-DIACYLGLUCOSAMINE HYDROLASE-RELATED"/>
    <property type="match status" value="1"/>
</dbReference>
<dbReference type="Pfam" id="PF00149">
    <property type="entry name" value="Metallophos"/>
    <property type="match status" value="1"/>
</dbReference>
<dbReference type="SUPFAM" id="SSF56300">
    <property type="entry name" value="Metallo-dependent phosphatases"/>
    <property type="match status" value="1"/>
</dbReference>
<feature type="chain" id="PRO_0000214134" description="UDP-2,3-diacylglucosamine hydrolase">
    <location>
        <begin position="1"/>
        <end position="240"/>
    </location>
</feature>
<feature type="binding site" evidence="1">
    <location>
        <position position="8"/>
    </location>
    <ligand>
        <name>Mn(2+)</name>
        <dbReference type="ChEBI" id="CHEBI:29035"/>
        <label>1</label>
    </ligand>
</feature>
<feature type="binding site" evidence="1">
    <location>
        <position position="10"/>
    </location>
    <ligand>
        <name>Mn(2+)</name>
        <dbReference type="ChEBI" id="CHEBI:29035"/>
        <label>1</label>
    </ligand>
</feature>
<feature type="binding site" evidence="1">
    <location>
        <position position="41"/>
    </location>
    <ligand>
        <name>Mn(2+)</name>
        <dbReference type="ChEBI" id="CHEBI:29035"/>
        <label>1</label>
    </ligand>
</feature>
<feature type="binding site" evidence="1">
    <location>
        <position position="41"/>
    </location>
    <ligand>
        <name>Mn(2+)</name>
        <dbReference type="ChEBI" id="CHEBI:29035"/>
        <label>2</label>
    </ligand>
</feature>
<feature type="binding site" evidence="1">
    <location>
        <begin position="79"/>
        <end position="80"/>
    </location>
    <ligand>
        <name>substrate</name>
    </ligand>
</feature>
<feature type="binding site" evidence="1">
    <location>
        <position position="79"/>
    </location>
    <ligand>
        <name>Mn(2+)</name>
        <dbReference type="ChEBI" id="CHEBI:29035"/>
        <label>2</label>
    </ligand>
</feature>
<feature type="binding site" evidence="1">
    <location>
        <position position="114"/>
    </location>
    <ligand>
        <name>Mn(2+)</name>
        <dbReference type="ChEBI" id="CHEBI:29035"/>
        <label>2</label>
    </ligand>
</feature>
<feature type="binding site" evidence="1">
    <location>
        <position position="122"/>
    </location>
    <ligand>
        <name>substrate</name>
    </ligand>
</feature>
<feature type="binding site" evidence="1">
    <location>
        <position position="160"/>
    </location>
    <ligand>
        <name>substrate</name>
    </ligand>
</feature>
<feature type="binding site" evidence="1">
    <location>
        <position position="164"/>
    </location>
    <ligand>
        <name>substrate</name>
    </ligand>
</feature>
<feature type="binding site" evidence="1">
    <location>
        <position position="167"/>
    </location>
    <ligand>
        <name>substrate</name>
    </ligand>
</feature>
<feature type="binding site" evidence="1">
    <location>
        <position position="195"/>
    </location>
    <ligand>
        <name>Mn(2+)</name>
        <dbReference type="ChEBI" id="CHEBI:29035"/>
        <label>2</label>
    </ligand>
</feature>
<feature type="binding site" evidence="1">
    <location>
        <position position="195"/>
    </location>
    <ligand>
        <name>substrate</name>
    </ligand>
</feature>
<feature type="binding site" evidence="1">
    <location>
        <position position="197"/>
    </location>
    <ligand>
        <name>Mn(2+)</name>
        <dbReference type="ChEBI" id="CHEBI:29035"/>
        <label>1</label>
    </ligand>
</feature>
<proteinExistence type="inferred from homology"/>
<evidence type="ECO:0000255" key="1">
    <source>
        <dbReference type="HAMAP-Rule" id="MF_00575"/>
    </source>
</evidence>